<protein>
    <recommendedName>
        <fullName>Eukaryotic translation initiation factor 5A-1</fullName>
        <shortName>eIF-5A-1</shortName>
    </recommendedName>
    <alternativeName>
        <fullName>Hypusine-containing protein HP2</fullName>
    </alternativeName>
    <alternativeName>
        <fullName>eIF-4D</fullName>
    </alternativeName>
</protein>
<accession>P23301</accession>
<accession>D3DLL5</accession>
<reference key="1">
    <citation type="journal article" date="1991" name="Mol. Cell. Biol.">
        <title>Translation initiation factor 5A and its hypusine modification are essential for cell viability in the yeast Saccharomyces cerevisiae.</title>
        <authorList>
            <person name="Schnier J."/>
            <person name="Schwelberger H.G."/>
            <person name="Smit-Mcbride Z."/>
            <person name="Kang H.A."/>
            <person name="Hershey J.W.B."/>
        </authorList>
    </citation>
    <scope>NUCLEOTIDE SEQUENCE [GENOMIC DNA]</scope>
</reference>
<reference key="2">
    <citation type="submission" date="1990-12" db="EMBL/GenBank/DDBJ databases">
        <authorList>
            <person name="Sandholzer U.R."/>
        </authorList>
    </citation>
    <scope>NUCLEOTIDE SEQUENCE [GENOMIC DNA]</scope>
    <source>
        <strain>DBY874</strain>
    </source>
</reference>
<reference key="3">
    <citation type="journal article" date="1990" name="Nucleic Acids Symp. Ser.">
        <title>Sequence determination of cDNA encoding yeast cycloheximide sensitivity factor (CH-SF) and its plausible role at a first peptide bond formation step in the initiation process of protein synthesis.</title>
        <authorList>
            <person name="Kitaoka Y."/>
            <person name="Miyazaki M."/>
        </authorList>
    </citation>
    <scope>NUCLEOTIDE SEQUENCE [MRNA]</scope>
</reference>
<reference key="4">
    <citation type="journal article" date="1997" name="Nature">
        <title>The nucleotide sequence of Saccharomyces cerevisiae chromosome V.</title>
        <authorList>
            <person name="Dietrich F.S."/>
            <person name="Mulligan J.T."/>
            <person name="Hennessy K.M."/>
            <person name="Yelton M.A."/>
            <person name="Allen E."/>
            <person name="Araujo R."/>
            <person name="Aviles E."/>
            <person name="Berno A."/>
            <person name="Brennan T."/>
            <person name="Carpenter J."/>
            <person name="Chen E."/>
            <person name="Cherry J.M."/>
            <person name="Chung E."/>
            <person name="Duncan M."/>
            <person name="Guzman E."/>
            <person name="Hartzell G."/>
            <person name="Hunicke-Smith S."/>
            <person name="Hyman R.W."/>
            <person name="Kayser A."/>
            <person name="Komp C."/>
            <person name="Lashkari D."/>
            <person name="Lew H."/>
            <person name="Lin D."/>
            <person name="Mosedale D."/>
            <person name="Nakahara K."/>
            <person name="Namath A."/>
            <person name="Norgren R."/>
            <person name="Oefner P."/>
            <person name="Oh C."/>
            <person name="Petel F.X."/>
            <person name="Roberts D."/>
            <person name="Sehl P."/>
            <person name="Schramm S."/>
            <person name="Shogren T."/>
            <person name="Smith V."/>
            <person name="Taylor P."/>
            <person name="Wei Y."/>
            <person name="Botstein D."/>
            <person name="Davis R.W."/>
        </authorList>
    </citation>
    <scope>NUCLEOTIDE SEQUENCE [LARGE SCALE GENOMIC DNA]</scope>
    <source>
        <strain>ATCC 204508 / S288c</strain>
    </source>
</reference>
<reference key="5">
    <citation type="journal article" date="2014" name="G3 (Bethesda)">
        <title>The reference genome sequence of Saccharomyces cerevisiae: Then and now.</title>
        <authorList>
            <person name="Engel S.R."/>
            <person name="Dietrich F.S."/>
            <person name="Fisk D.G."/>
            <person name="Binkley G."/>
            <person name="Balakrishnan R."/>
            <person name="Costanzo M.C."/>
            <person name="Dwight S.S."/>
            <person name="Hitz B.C."/>
            <person name="Karra K."/>
            <person name="Nash R.S."/>
            <person name="Weng S."/>
            <person name="Wong E.D."/>
            <person name="Lloyd P."/>
            <person name="Skrzypek M.S."/>
            <person name="Miyasato S.R."/>
            <person name="Simison M."/>
            <person name="Cherry J.M."/>
        </authorList>
    </citation>
    <scope>GENOME REANNOTATION</scope>
    <source>
        <strain>ATCC 204508 / S288c</strain>
    </source>
</reference>
<reference key="6">
    <citation type="journal article" date="1993" name="FEBS Lett.">
        <title>Determination and mutational analysis of the phosphorylation site in the hypusine-containing protein Hyp2p.</title>
        <authorList>
            <person name="Klier H."/>
            <person name="Woehl T."/>
            <person name="Eckerskorn C."/>
            <person name="Magdolen V."/>
            <person name="Lottspeich F."/>
        </authorList>
    </citation>
    <scope>PARTIAL PROTEIN SEQUENCE</scope>
    <scope>ACETYLATION AT SER-2</scope>
    <scope>PHOSPHORYLATION AT SER-2</scope>
</reference>
<reference key="7">
    <citation type="journal article" date="1978" name="J. Biol. Chem.">
        <title>The mechanism of action of protein synthesis initiation factors from rabbit reticulocytes.</title>
        <authorList>
            <person name="Benne R."/>
            <person name="Hershey J.W.B."/>
        </authorList>
    </citation>
    <scope>FUNCTION</scope>
</reference>
<reference key="8">
    <citation type="journal article" date="1987" name="J. Biol. Chem.">
        <title>Hypusine formation in eukaryotic initiation factor 4D is not reversed when rates or specificity of protein synthesis is altered.</title>
        <authorList>
            <person name="Gordon E.D."/>
            <person name="Mora R."/>
            <person name="Meredith S.C."/>
            <person name="Lindquist S.L."/>
        </authorList>
    </citation>
    <scope>HYPUSINE</scope>
</reference>
<reference key="9">
    <citation type="journal article" date="1993" name="J. Biol. Chem.">
        <title>Translation initiation factor eIF-5A expressed from either of two yeast genes or from human cDNA. Functional identity under aerobic and anaerobic conditions.</title>
        <authorList>
            <person name="Schwelberger H.G."/>
            <person name="Kang H.A."/>
            <person name="Hershey J.W.B."/>
        </authorList>
    </citation>
    <scope>INDUCTION</scope>
</reference>
<reference key="10">
    <citation type="journal article" date="1993" name="J. Biol. Chem.">
        <title>Translation initiation factor eIF-5A, the hypusine-containing protein, is phosphorylated on serine in Saccharomyces cerevisiae.</title>
        <authorList>
            <person name="Kang H.A."/>
            <person name="Schwelberger H.G."/>
            <person name="Hershey J.W.B."/>
        </authorList>
    </citation>
    <scope>PHOSPHORYLATION AT SER-2</scope>
</reference>
<reference key="11">
    <citation type="journal article" date="1994" name="J. Biol. Chem.">
        <title>Effect of initiation factor eIF-5A depletion on protein synthesis and proliferation of Saccharomyces cerevisiae.</title>
        <authorList>
            <person name="Kang H.A."/>
            <person name="Hershey J.W.B."/>
        </authorList>
    </citation>
    <scope>FUNCTION</scope>
</reference>
<reference key="12">
    <citation type="journal article" date="1998" name="EMBO J.">
        <title>A single amino acid substitution in yeast eIF-5A results in mRNA stabilization.</title>
        <authorList>
            <person name="Zuk D."/>
            <person name="Jacobson A."/>
        </authorList>
    </citation>
    <scope>MUTAGENESIS OF SER-149</scope>
    <scope>FUNCTION</scope>
</reference>
<reference key="13">
    <citation type="journal article" date="1999" name="Biochem. J.">
        <title>Complex formation between deoxyhypusine synthase and its protein substrate, the eukaryotic translation initiation factor 5A (eIF5A) precursor.</title>
        <authorList>
            <person name="Lee Y.B."/>
            <person name="Joe Y.A."/>
            <person name="Wolff E.C."/>
            <person name="Dimitriadis E.K."/>
            <person name="Park M.H."/>
        </authorList>
    </citation>
    <scope>SUBCELLULAR LOCATION</scope>
    <scope>FUNCTION</scope>
    <scope>MUTAGENESIS OF CYS-39 AND PRO-83</scope>
</reference>
<reference key="14">
    <citation type="journal article" date="2002" name="Genetics">
        <title>Genetic interactions of yeast eukaryotic translation initiation factor 5A (eIF5A) reveal connections to poly(A)-binding protein and protein kinase C signaling.</title>
        <authorList>
            <person name="Valentini S.R."/>
            <person name="Casolari J.M."/>
            <person name="Oliveira C.C."/>
            <person name="Silver P.A."/>
            <person name="McBride A.E."/>
        </authorList>
    </citation>
    <scope>SUBCELLULAR LOCATION</scope>
    <scope>MUTAGENESIS OF CYS-39; PRO-83 AND GLY-118</scope>
</reference>
<reference key="15">
    <citation type="journal article" date="2003" name="FEBS Lett.">
        <title>Mapping eIF5A binding sites for Dys1 and Lia1: in vivo evidence for regulation of eIF5A hypusination.</title>
        <authorList>
            <person name="Thompson G.M."/>
            <person name="Cano V.S.P."/>
            <person name="Valentini S.R."/>
        </authorList>
    </citation>
    <scope>INTERACTION WITH DYS1 AND LIA1</scope>
</reference>
<reference key="16">
    <citation type="journal article" date="2005" name="Genetics">
        <title>Pkc1 acts through Zds1 and Gic1 to suppress growth and cell polarity defects of a yeast eIF5A mutant.</title>
        <authorList>
            <person name="Zanelli C.F."/>
            <person name="Valentini S.R."/>
        </authorList>
    </citation>
    <scope>FUNCTION</scope>
</reference>
<reference key="17">
    <citation type="journal article" date="2005" name="Mol. Cell. Proteomics">
        <title>Quantitative phosphoproteomics applied to the yeast pheromone signaling pathway.</title>
        <authorList>
            <person name="Gruhler A."/>
            <person name="Olsen J.V."/>
            <person name="Mohammed S."/>
            <person name="Mortensen P."/>
            <person name="Faergeman N.J."/>
            <person name="Mann M."/>
            <person name="Jensen O.N."/>
        </authorList>
    </citation>
    <scope>PHOSPHORYLATION [LARGE SCALE ANALYSIS] AT SER-2</scope>
    <scope>IDENTIFICATION BY MASS SPECTROMETRY [LARGE SCALE ANALYSIS]</scope>
    <source>
        <strain>YAL6B</strain>
    </source>
</reference>
<reference key="18">
    <citation type="journal article" date="2006" name="Biochem. Biophys. Res. Commun.">
        <title>eIF5A binds to translational machinery components and affects translation in yeast.</title>
        <authorList>
            <person name="Zanelli C.F."/>
            <person name="Maragno A.L.C."/>
            <person name="Gregio A.P.B."/>
            <person name="Komili S."/>
            <person name="Pandolfi J.R."/>
            <person name="Mestriner C.A."/>
            <person name="Lustri W.R."/>
            <person name="Valentini S.R."/>
        </authorList>
    </citation>
    <scope>FUNCTION</scope>
    <scope>ASSOCIATION WITH THE 80S RIBOSOME</scope>
    <scope>MUTAGENESIS OF LYS-51</scope>
</reference>
<reference key="19">
    <citation type="journal article" date="2006" name="J. Cell. Biochem.">
        <title>Tandem affinity purification revealed the hypusine-dependent binding of eukaryotic initiation factor 5A to the translating 80S ribosomal complex.</title>
        <authorList>
            <person name="Jao D.L."/>
            <person name="Chen K.Y."/>
        </authorList>
    </citation>
    <scope>INTERACTION WITH DYS1</scope>
    <scope>RIBOSOME-BINDING</scope>
    <scope>MUTAGENESIS OF LYS-51</scope>
</reference>
<reference key="20">
    <citation type="journal article" date="2006" name="Mol. Genet. Genomics">
        <title>Rapid depletion of mutant eukaryotic initiation factor 5A at restrictive temperature reveals connections to actin cytoskeleton and cell cycle progression.</title>
        <authorList>
            <person name="Chatterjee I."/>
            <person name="Gross S.R."/>
            <person name="Kinzy T.G."/>
            <person name="Chen K.Y."/>
        </authorList>
    </citation>
    <scope>MUTAGENESIS OF LEU-102</scope>
    <scope>FUNCTION</scope>
</reference>
<reference key="21">
    <citation type="journal article" date="2007" name="J. Proteome Res.">
        <title>Large-scale phosphorylation analysis of alpha-factor-arrested Saccharomyces cerevisiae.</title>
        <authorList>
            <person name="Li X."/>
            <person name="Gerber S.A."/>
            <person name="Rudner A.D."/>
            <person name="Beausoleil S.A."/>
            <person name="Haas W."/>
            <person name="Villen J."/>
            <person name="Elias J.E."/>
            <person name="Gygi S.P."/>
        </authorList>
    </citation>
    <scope>PHOSPHORYLATION [LARGE SCALE ANALYSIS] AT SER-2 AND SER-74</scope>
    <scope>IDENTIFICATION BY MASS SPECTROMETRY [LARGE SCALE ANALYSIS]</scope>
    <source>
        <strain>ADR376</strain>
    </source>
</reference>
<reference key="22">
    <citation type="journal article" date="2008" name="FEBS J.">
        <title>Structural modeling and mutational analysis of yeast eukaryotic translation initiation factor 5A reveal new critical residues and reinforce its involvement in protein synthesis.</title>
        <authorList>
            <person name="Dias C.A.O."/>
            <person name="Cano V.S.P."/>
            <person name="Rangel S.M."/>
            <person name="Apponi L.H."/>
            <person name="Frigieri M.C."/>
            <person name="Muniz J.R.C."/>
            <person name="Garcia W."/>
            <person name="Park M.H."/>
            <person name="Garratt R.C."/>
            <person name="Zanelli C.F."/>
            <person name="Valentini S.R."/>
        </authorList>
    </citation>
    <scope>MUTAGENESIS OF GLN-22; SER-24; CYS-39; GLY-50; LYS-51; HIS-52; GLY-53; HIS-54; LYS-56; VAL-57; THR-66; PRO-83; LEU-93; PRO-116; GLY-118; LEU-120; ASP-122; LEU-124; SER-140; MET-142; SER-149 AND 116-PRO--ASP-157</scope>
</reference>
<reference key="23">
    <citation type="journal article" date="2008" name="Mol. Cell. Proteomics">
        <title>A multidimensional chromatography technology for in-depth phosphoproteome analysis.</title>
        <authorList>
            <person name="Albuquerque C.P."/>
            <person name="Smolka M.B."/>
            <person name="Payne S.H."/>
            <person name="Bafna V."/>
            <person name="Eng J."/>
            <person name="Zhou H."/>
        </authorList>
    </citation>
    <scope>PHOSPHORYLATION [LARGE SCALE ANALYSIS] AT SER-2 AND SER-74</scope>
    <scope>IDENTIFICATION BY MASS SPECTROMETRY [LARGE SCALE ANALYSIS]</scope>
</reference>
<reference key="24">
    <citation type="journal article" date="2009" name="Biochem. Biophys. Res. Commun.">
        <title>eIF5A has a function in the elongation step of translation in yeast.</title>
        <authorList>
            <person name="Gregio A.P.B."/>
            <person name="Cano V.P.S."/>
            <person name="Avaca J.S."/>
            <person name="Valentini S.R."/>
            <person name="Zanelli C.F."/>
        </authorList>
    </citation>
    <scope>FUNCTION</scope>
</reference>
<reference key="25">
    <citation type="journal article" date="2009" name="FEBS J.">
        <title>Dimerization of the yeast eukaryotic translation initiation factor 5A requires hypusine and is RNA dependent.</title>
        <authorList>
            <person name="Gentz P.M."/>
            <person name="Blatch G.L."/>
            <person name="Dorrington R.A."/>
        </authorList>
    </citation>
    <scope>SUBUNIT</scope>
    <scope>HYPUSINE AT LYS-51</scope>
    <scope>MUTAGENESIS OF LYS-51</scope>
</reference>
<reference key="26">
    <citation type="journal article" date="2009" name="Nature">
        <title>Hypusine-containing protein eIF5A promotes translation elongation.</title>
        <authorList>
            <person name="Saini P."/>
            <person name="Eyler D.E."/>
            <person name="Green R."/>
            <person name="Dever T.E."/>
        </authorList>
    </citation>
    <scope>FUNCTION</scope>
    <scope>MUTAGENESIS OF LYS-51; ASP-63 AND SER-149</scope>
</reference>
<reference key="27">
    <citation type="journal article" date="2009" name="Science">
        <title>Global analysis of Cdk1 substrate phosphorylation sites provides insights into evolution.</title>
        <authorList>
            <person name="Holt L.J."/>
            <person name="Tuch B.B."/>
            <person name="Villen J."/>
            <person name="Johnson A.D."/>
            <person name="Gygi S.P."/>
            <person name="Morgan D.O."/>
        </authorList>
    </citation>
    <scope>PHOSPHORYLATION [LARGE SCALE ANALYSIS] AT SER-2 AND THR-10</scope>
    <scope>IDENTIFICATION BY MASS SPECTROMETRY [LARGE SCALE ANALYSIS]</scope>
</reference>
<reference key="28">
    <citation type="journal article" date="2012" name="Proc. Natl. Acad. Sci. U.S.A.">
        <title>N-terminal acetylome analyses and functional insights of the N-terminal acetyltransferase NatB.</title>
        <authorList>
            <person name="Van Damme P."/>
            <person name="Lasa M."/>
            <person name="Polevoda B."/>
            <person name="Gazquez C."/>
            <person name="Elosegui-Artola A."/>
            <person name="Kim D.S."/>
            <person name="De Juan-Pardo E."/>
            <person name="Demeyer K."/>
            <person name="Hole K."/>
            <person name="Larrea E."/>
            <person name="Timmerman E."/>
            <person name="Prieto J."/>
            <person name="Arnesen T."/>
            <person name="Sherman F."/>
            <person name="Gevaert K."/>
            <person name="Aldabe R."/>
        </authorList>
    </citation>
    <scope>ACETYLATION [LARGE SCALE ANALYSIS] AT SER-2</scope>
    <scope>CLEAVAGE OF INITIATOR METHIONINE [LARGE SCALE ANALYSIS]</scope>
    <scope>IDENTIFICATION BY MASS SPECTROMETRY [LARGE SCALE ANALYSIS]</scope>
</reference>
<reference key="29">
    <citation type="journal article" date="2012" name="Proteomics">
        <title>Sites of ubiquitin attachment in Saccharomyces cerevisiae.</title>
        <authorList>
            <person name="Starita L.M."/>
            <person name="Lo R.S."/>
            <person name="Eng J.K."/>
            <person name="von Haller P.D."/>
            <person name="Fields S."/>
        </authorList>
    </citation>
    <scope>UBIQUITINATION [LARGE SCALE ANALYSIS] AT LYS-86</scope>
    <scope>IDENTIFICATION BY MASS SPECTROMETRY [LARGE SCALE ANALYSIS]</scope>
</reference>
<reference key="30">
    <citation type="journal article" date="2013" name="Mol. Cell">
        <title>eIF5A promotes translation of polyproline motifs.</title>
        <authorList>
            <person name="Gutierrez E."/>
            <person name="Shin B.S."/>
            <person name="Woolstenhulme C.J."/>
            <person name="Kim J.R."/>
            <person name="Saini P."/>
            <person name="Buskirk A.R."/>
            <person name="Dever T.E."/>
        </authorList>
    </citation>
    <scope>FUNCTION</scope>
    <scope>MUTAGENESIS OF SER-149</scope>
</reference>
<reference key="31">
    <citation type="journal article" date="2014" name="Genetics">
        <title>Fertility and polarized cell growth depends on eIF5A for translation of polyproline-rich formins in Saccharomyces cerevisiae.</title>
        <authorList>
            <person name="Li T."/>
            <person name="Belda-Palazon B."/>
            <person name="Ferrando A."/>
            <person name="Alepuz P."/>
        </authorList>
    </citation>
    <scope>FUNCTION</scope>
</reference>
<reference key="32">
    <citation type="journal article" date="2016" name="PLoS ONE">
        <title>Evidence for a negative cooperativity between eIF5A and eEF2 on binding to the ribosome.</title>
        <authorList>
            <person name="Rossi D."/>
            <person name="Barbosa N.M."/>
            <person name="Galvao F.C."/>
            <person name="Boldrin P.E."/>
            <person name="Hershey J.W."/>
            <person name="Zanelli C.F."/>
            <person name="Fraser C.S."/>
            <person name="Valentini S.R."/>
        </authorList>
    </citation>
    <scope>RIBOSOME-BINDING</scope>
    <scope>MUTAGENESIS OF GLN-22; LYS-56 AND LEU-93</scope>
</reference>
<reference key="33">
    <citation type="journal article" date="2017" name="Mol. Cell">
        <title>eIF5A functions globally in translation elongation and termination.</title>
        <authorList>
            <person name="Schuller A.P."/>
            <person name="Wu C.C."/>
            <person name="Dever T.E."/>
            <person name="Buskirk A.R."/>
            <person name="Green R."/>
        </authorList>
    </citation>
    <scope>FUNCTION</scope>
</reference>
<reference evidence="29" key="34">
    <citation type="journal article" date="2016" name="J. Mol. Biol.">
        <title>Crystal structure of Hypusine-containing translation factor eIF5A bound to a rotated eukaryotic ribosome.</title>
        <authorList>
            <person name="Melnikov S."/>
            <person name="Mailliot J."/>
            <person name="Shin B.S."/>
            <person name="Rigger L."/>
            <person name="Yusupova G."/>
            <person name="Micura R."/>
            <person name="Dever T.E."/>
            <person name="Yusupov M."/>
        </authorList>
    </citation>
    <scope>X-RAY CRYSTALLOGRAPHY (3.25 ANGSTROMS) IN COMPLEX WITH RIBOSOME</scope>
    <scope>HYPUSINE AT LYS-51</scope>
</reference>
<reference evidence="30" key="35">
    <citation type="journal article" date="2016" name="Nucleic Acids Res.">
        <title>Structure of the hypusinylated eukaryotic translation factor eIF-5A bound to the ribosome.</title>
        <authorList>
            <person name="Schmidt C."/>
            <person name="Becker T."/>
            <person name="Heuer A."/>
            <person name="Braunger K."/>
            <person name="Shanmuganathan V."/>
            <person name="Pech M."/>
            <person name="Berninghausen O."/>
            <person name="Wilson D.N."/>
            <person name="Beckmann R."/>
        </authorList>
    </citation>
    <scope>STRUCTURE BY ELECTRON MICROSCOPY (3.88 ANGSTROMS) IN COMPLEX WITH RIBOSOME</scope>
    <scope>HYPUSINE AT LYS-51</scope>
</reference>
<reference key="36">
    <citation type="journal article" date="2023" name="Mol. Cell">
        <title>Molecular basis of eIF5A-dependent CAT tailing in eukaryotic ribosome-associated quality control.</title>
        <authorList>
            <person name="Tesina P."/>
            <person name="Ebine S."/>
            <person name="Buschauer R."/>
            <person name="Thoms M."/>
            <person name="Matsuo Y."/>
            <person name="Inada T."/>
            <person name="Beckmann R."/>
        </authorList>
    </citation>
    <scope>STRUCTURE BY ELECTRON MICROSCOPY (2.7 ANGSTROMS) IN COMPLEX WITH RQC2; RKK1; TIF6 AND 60S RIBOSOMAL SUBUNIT</scope>
    <scope>FUNCTION</scope>
    <scope>MUTAGENESIS OF LYS-51; LYS-69 AND LEU-102</scope>
</reference>
<keyword id="KW-0002">3D-structure</keyword>
<keyword id="KW-0007">Acetylation</keyword>
<keyword id="KW-0963">Cytoplasm</keyword>
<keyword id="KW-0903">Direct protein sequencing</keyword>
<keyword id="KW-0251">Elongation factor</keyword>
<keyword id="KW-0385">Hypusine</keyword>
<keyword id="KW-1017">Isopeptide bond</keyword>
<keyword id="KW-0597">Phosphoprotein</keyword>
<keyword id="KW-0648">Protein biosynthesis</keyword>
<keyword id="KW-1185">Reference proteome</keyword>
<keyword id="KW-0694">RNA-binding</keyword>
<keyword id="KW-0832">Ubl conjugation</keyword>
<sequence>MSDEEHTFETADAGSSATYPMQCSALRKNGFVVIKSRPCKIVDMSTSKTGKHGHAKVHLVAIDIFTGKKLEDLSPSTHNMEVPVVKRNEYQLLDIDDGFLSLMNMDGDTKDDVKAPEGELGDSLQTAFDEGKDLMVTIISAMGEEAAISFKEAARTD</sequence>
<evidence type="ECO:0000250" key="1">
    <source>
        <dbReference type="UniProtKB" id="P19211"/>
    </source>
</evidence>
<evidence type="ECO:0000269" key="2">
    <source>
    </source>
</evidence>
<evidence type="ECO:0000269" key="3">
    <source>
    </source>
</evidence>
<evidence type="ECO:0000269" key="4">
    <source>
    </source>
</evidence>
<evidence type="ECO:0000269" key="5">
    <source>
    </source>
</evidence>
<evidence type="ECO:0000269" key="6">
    <source>
    </source>
</evidence>
<evidence type="ECO:0000269" key="7">
    <source>
    </source>
</evidence>
<evidence type="ECO:0000269" key="8">
    <source>
    </source>
</evidence>
<evidence type="ECO:0000269" key="9">
    <source>
    </source>
</evidence>
<evidence type="ECO:0000269" key="10">
    <source>
    </source>
</evidence>
<evidence type="ECO:0000269" key="11">
    <source>
    </source>
</evidence>
<evidence type="ECO:0000269" key="12">
    <source>
    </source>
</evidence>
<evidence type="ECO:0000269" key="13">
    <source>
    </source>
</evidence>
<evidence type="ECO:0000269" key="14">
    <source>
    </source>
</evidence>
<evidence type="ECO:0000269" key="15">
    <source>
    </source>
</evidence>
<evidence type="ECO:0000269" key="16">
    <source>
    </source>
</evidence>
<evidence type="ECO:0000269" key="17">
    <source>
    </source>
</evidence>
<evidence type="ECO:0000269" key="18">
    <source>
    </source>
</evidence>
<evidence type="ECO:0000269" key="19">
    <source>
    </source>
</evidence>
<evidence type="ECO:0000269" key="20">
    <source>
    </source>
</evidence>
<evidence type="ECO:0000269" key="21">
    <source>
    </source>
</evidence>
<evidence type="ECO:0000269" key="22">
    <source>
    </source>
</evidence>
<evidence type="ECO:0000269" key="23">
    <source>
    </source>
</evidence>
<evidence type="ECO:0000269" key="24">
    <source>
    </source>
</evidence>
<evidence type="ECO:0000269" key="25">
    <source>
    </source>
</evidence>
<evidence type="ECO:0000269" key="26">
    <source>
    </source>
</evidence>
<evidence type="ECO:0000305" key="27"/>
<evidence type="ECO:0000305" key="28">
    <source>
    </source>
</evidence>
<evidence type="ECO:0007744" key="29">
    <source>
        <dbReference type="PDB" id="5DC3"/>
    </source>
</evidence>
<evidence type="ECO:0007744" key="30">
    <source>
        <dbReference type="PDB" id="5GAK"/>
    </source>
</evidence>
<evidence type="ECO:0007744" key="31">
    <source>
    </source>
</evidence>
<evidence type="ECO:0007744" key="32">
    <source>
    </source>
</evidence>
<evidence type="ECO:0007744" key="33">
    <source>
    </source>
</evidence>
<evidence type="ECO:0007744" key="34">
    <source>
    </source>
</evidence>
<evidence type="ECO:0007744" key="35">
    <source>
    </source>
</evidence>
<evidence type="ECO:0007744" key="36">
    <source>
    </source>
</evidence>
<evidence type="ECO:0007829" key="37">
    <source>
        <dbReference type="PDB" id="3ER0"/>
    </source>
</evidence>
<dbReference type="EMBL" id="M63541">
    <property type="protein sequence ID" value="AAA35155.1"/>
    <property type="molecule type" value="Genomic_DNA"/>
</dbReference>
<dbReference type="EMBL" id="X56236">
    <property type="protein sequence ID" value="CAA39693.1"/>
    <property type="molecule type" value="Genomic_DNA"/>
</dbReference>
<dbReference type="EMBL" id="D83166">
    <property type="protein sequence ID" value="BAA11826.1"/>
    <property type="molecule type" value="mRNA"/>
</dbReference>
<dbReference type="EMBL" id="U18779">
    <property type="protein sequence ID" value="AAB65008.1"/>
    <property type="molecule type" value="Genomic_DNA"/>
</dbReference>
<dbReference type="EMBL" id="BK006939">
    <property type="protein sequence ID" value="DAA07619.1"/>
    <property type="molecule type" value="Genomic_DNA"/>
</dbReference>
<dbReference type="PIR" id="A40259">
    <property type="entry name" value="FIBYA1"/>
</dbReference>
<dbReference type="RefSeq" id="NP_010880.3">
    <property type="nucleotide sequence ID" value="NM_001178849.3"/>
</dbReference>
<dbReference type="PDB" id="3ER0">
    <property type="method" value="X-ray"/>
    <property type="resolution" value="3.35 A"/>
    <property type="chains" value="A/B=1-157"/>
</dbReference>
<dbReference type="PDB" id="5DAT">
    <property type="method" value="X-ray"/>
    <property type="resolution" value="3.15 A"/>
    <property type="chains" value="f=1-157"/>
</dbReference>
<dbReference type="PDB" id="5DC3">
    <property type="method" value="X-ray"/>
    <property type="resolution" value="3.25 A"/>
    <property type="chains" value="f=1-157"/>
</dbReference>
<dbReference type="PDB" id="5DGE">
    <property type="method" value="X-ray"/>
    <property type="resolution" value="3.45 A"/>
    <property type="chains" value="f=1-157"/>
</dbReference>
<dbReference type="PDB" id="5DGF">
    <property type="method" value="X-ray"/>
    <property type="resolution" value="3.30 A"/>
    <property type="chains" value="f=1-157"/>
</dbReference>
<dbReference type="PDB" id="5GAK">
    <property type="method" value="EM"/>
    <property type="resolution" value="3.88 A"/>
    <property type="chains" value="q=1-157"/>
</dbReference>
<dbReference type="PDB" id="5MC6">
    <property type="method" value="EM"/>
    <property type="resolution" value="3.80 A"/>
    <property type="chains" value="BT=1-157"/>
</dbReference>
<dbReference type="PDB" id="6Q84">
    <property type="method" value="X-ray"/>
    <property type="resolution" value="3.70 A"/>
    <property type="chains" value="C/F=16-157"/>
</dbReference>
<dbReference type="PDB" id="6TNU">
    <property type="method" value="EM"/>
    <property type="resolution" value="3.10 A"/>
    <property type="chains" value="eI=4-157"/>
</dbReference>
<dbReference type="PDB" id="7NRC">
    <property type="method" value="EM"/>
    <property type="resolution" value="3.90 A"/>
    <property type="chains" value="Ls=4-157"/>
</dbReference>
<dbReference type="PDB" id="8AAF">
    <property type="method" value="EM"/>
    <property type="resolution" value="2.50 A"/>
    <property type="chains" value="v=1-157"/>
</dbReference>
<dbReference type="PDB" id="8AGT">
    <property type="method" value="EM"/>
    <property type="resolution" value="2.60 A"/>
    <property type="chains" value="v=1-157"/>
</dbReference>
<dbReference type="PDB" id="8AGU">
    <property type="method" value="EM"/>
    <property type="resolution" value="2.70 A"/>
    <property type="chains" value="v=1-157"/>
</dbReference>
<dbReference type="PDB" id="8AGV">
    <property type="method" value="EM"/>
    <property type="resolution" value="2.60 A"/>
    <property type="chains" value="v=1-157"/>
</dbReference>
<dbReference type="PDB" id="8AGX">
    <property type="method" value="EM"/>
    <property type="resolution" value="2.40 A"/>
    <property type="chains" value="v=1-157"/>
</dbReference>
<dbReference type="PDB" id="8AGZ">
    <property type="method" value="EM"/>
    <property type="resolution" value="2.60 A"/>
    <property type="chains" value="v=1-157"/>
</dbReference>
<dbReference type="PDB" id="8BN3">
    <property type="method" value="EM"/>
    <property type="resolution" value="2.40 A"/>
    <property type="chains" value="eI=10-154"/>
</dbReference>
<dbReference type="PDB" id="8K2D">
    <property type="method" value="EM"/>
    <property type="resolution" value="3.20 A"/>
    <property type="chains" value="CE=1-157"/>
</dbReference>
<dbReference type="PDB" id="8UT0">
    <property type="method" value="EM"/>
    <property type="resolution" value="3.22 A"/>
    <property type="chains" value="Ls=1-157"/>
</dbReference>
<dbReference type="PDB" id="8Y0U">
    <property type="method" value="EM"/>
    <property type="resolution" value="3.59 A"/>
    <property type="chains" value="5=1-157"/>
</dbReference>
<dbReference type="PDBsum" id="3ER0"/>
<dbReference type="PDBsum" id="5DAT"/>
<dbReference type="PDBsum" id="5DC3"/>
<dbReference type="PDBsum" id="5DGE"/>
<dbReference type="PDBsum" id="5DGF"/>
<dbReference type="PDBsum" id="5GAK"/>
<dbReference type="PDBsum" id="5MC6"/>
<dbReference type="PDBsum" id="6Q84"/>
<dbReference type="PDBsum" id="6TNU"/>
<dbReference type="PDBsum" id="7NRC"/>
<dbReference type="PDBsum" id="8AAF"/>
<dbReference type="PDBsum" id="8AGT"/>
<dbReference type="PDBsum" id="8AGU"/>
<dbReference type="PDBsum" id="8AGV"/>
<dbReference type="PDBsum" id="8AGX"/>
<dbReference type="PDBsum" id="8AGZ"/>
<dbReference type="PDBsum" id="8BN3"/>
<dbReference type="PDBsum" id="8K2D"/>
<dbReference type="PDBsum" id="8UT0"/>
<dbReference type="PDBsum" id="8Y0U"/>
<dbReference type="EMDB" id="EMD-10537"/>
<dbReference type="EMDB" id="EMD-12534"/>
<dbReference type="EMDB" id="EMD-15296"/>
<dbReference type="EMDB" id="EMD-15423"/>
<dbReference type="EMDB" id="EMD-15424"/>
<dbReference type="EMDB" id="EMD-15425"/>
<dbReference type="EMDB" id="EMD-15427"/>
<dbReference type="EMDB" id="EMD-15428"/>
<dbReference type="EMDB" id="EMD-3227"/>
<dbReference type="EMDB" id="EMD-3461"/>
<dbReference type="EMDB" id="EMD-36839"/>
<dbReference type="SMR" id="P23301"/>
<dbReference type="BioGRID" id="36695">
    <property type="interactions" value="1086"/>
</dbReference>
<dbReference type="DIP" id="DIP-4230N"/>
<dbReference type="FunCoup" id="P23301">
    <property type="interactions" value="1252"/>
</dbReference>
<dbReference type="IntAct" id="P23301">
    <property type="interactions" value="84"/>
</dbReference>
<dbReference type="MINT" id="P23301"/>
<dbReference type="STRING" id="4932.YEL034W"/>
<dbReference type="CarbonylDB" id="P23301"/>
<dbReference type="iPTMnet" id="P23301"/>
<dbReference type="PaxDb" id="4932-YEL034W"/>
<dbReference type="PeptideAtlas" id="P23301"/>
<dbReference type="TopDownProteomics" id="P23301"/>
<dbReference type="EnsemblFungi" id="YEL034W_mRNA">
    <property type="protein sequence ID" value="YEL034W"/>
    <property type="gene ID" value="YEL034W"/>
</dbReference>
<dbReference type="GeneID" id="856677"/>
<dbReference type="KEGG" id="sce:YEL034W"/>
<dbReference type="AGR" id="SGD:S000000760"/>
<dbReference type="SGD" id="S000000760">
    <property type="gene designation" value="HYP2"/>
</dbReference>
<dbReference type="VEuPathDB" id="FungiDB:YEL034W"/>
<dbReference type="eggNOG" id="KOG3271">
    <property type="taxonomic scope" value="Eukaryota"/>
</dbReference>
<dbReference type="GeneTree" id="ENSGT00390000003738"/>
<dbReference type="HOGENOM" id="CLU_102600_0_0_1"/>
<dbReference type="InParanoid" id="P23301"/>
<dbReference type="OMA" id="KDDVRMP"/>
<dbReference type="OrthoDB" id="9975114at2759"/>
<dbReference type="BioCyc" id="YEAST:G3O-30156-MONOMER"/>
<dbReference type="Reactome" id="R-SCE-204626">
    <property type="pathway name" value="Hypusine synthesis from eIF5A-lysine"/>
</dbReference>
<dbReference type="BioGRID-ORCS" id="856677">
    <property type="hits" value="4 hits in 10 CRISPR screens"/>
</dbReference>
<dbReference type="CD-CODE" id="E03F929F">
    <property type="entry name" value="Stress granule"/>
</dbReference>
<dbReference type="ChiTaRS" id="HYP2">
    <property type="organism name" value="yeast"/>
</dbReference>
<dbReference type="EvolutionaryTrace" id="P23301"/>
<dbReference type="PRO" id="PR:P23301"/>
<dbReference type="Proteomes" id="UP000002311">
    <property type="component" value="Chromosome V"/>
</dbReference>
<dbReference type="RNAct" id="P23301">
    <property type="molecule type" value="protein"/>
</dbReference>
<dbReference type="GO" id="GO:0005737">
    <property type="term" value="C:cytoplasm"/>
    <property type="evidence" value="ECO:0007005"/>
    <property type="project" value="SGD"/>
</dbReference>
<dbReference type="GO" id="GO:0005829">
    <property type="term" value="C:cytosol"/>
    <property type="evidence" value="ECO:0007669"/>
    <property type="project" value="GOC"/>
</dbReference>
<dbReference type="GO" id="GO:0005739">
    <property type="term" value="C:mitochondrion"/>
    <property type="evidence" value="ECO:0007005"/>
    <property type="project" value="SGD"/>
</dbReference>
<dbReference type="GO" id="GO:0048471">
    <property type="term" value="C:perinuclear region of cytoplasm"/>
    <property type="evidence" value="ECO:0000314"/>
    <property type="project" value="SGD"/>
</dbReference>
<dbReference type="GO" id="GO:0043022">
    <property type="term" value="F:ribosome binding"/>
    <property type="evidence" value="ECO:0000314"/>
    <property type="project" value="UniProtKB"/>
</dbReference>
<dbReference type="GO" id="GO:0003723">
    <property type="term" value="F:RNA binding"/>
    <property type="evidence" value="ECO:0000314"/>
    <property type="project" value="SGD"/>
</dbReference>
<dbReference type="GO" id="GO:0003746">
    <property type="term" value="F:translation elongation factor activity"/>
    <property type="evidence" value="ECO:0000314"/>
    <property type="project" value="SGD"/>
</dbReference>
<dbReference type="GO" id="GO:0003743">
    <property type="term" value="F:translation initiation factor activity"/>
    <property type="evidence" value="ECO:0000314"/>
    <property type="project" value="SGD"/>
</dbReference>
<dbReference type="GO" id="GO:0140708">
    <property type="term" value="P:CAT tailing"/>
    <property type="evidence" value="ECO:0000314"/>
    <property type="project" value="UniProtKB"/>
</dbReference>
<dbReference type="GO" id="GO:0002182">
    <property type="term" value="P:cytoplasmic translational elongation"/>
    <property type="evidence" value="ECO:0000314"/>
    <property type="project" value="UniProtKB"/>
</dbReference>
<dbReference type="GO" id="GO:0097622">
    <property type="term" value="P:cytoplasmic translational elongation through polyproline stretches"/>
    <property type="evidence" value="ECO:0000314"/>
    <property type="project" value="UniProtKB"/>
</dbReference>
<dbReference type="GO" id="GO:0002184">
    <property type="term" value="P:cytoplasmic translational termination"/>
    <property type="evidence" value="ECO:0000314"/>
    <property type="project" value="UniProtKB"/>
</dbReference>
<dbReference type="GO" id="GO:1903272">
    <property type="term" value="P:positive regulation of cytoplasmic translational elongation through polyproline stretches"/>
    <property type="evidence" value="ECO:0000315"/>
    <property type="project" value="SGD"/>
</dbReference>
<dbReference type="GO" id="GO:0045901">
    <property type="term" value="P:positive regulation of translational elongation"/>
    <property type="evidence" value="ECO:0000314"/>
    <property type="project" value="SGD"/>
</dbReference>
<dbReference type="GO" id="GO:0045948">
    <property type="term" value="P:positive regulation of translational initiation"/>
    <property type="evidence" value="ECO:0000314"/>
    <property type="project" value="SGD"/>
</dbReference>
<dbReference type="GO" id="GO:0045905">
    <property type="term" value="P:positive regulation of translational termination"/>
    <property type="evidence" value="ECO:0000314"/>
    <property type="project" value="SGD"/>
</dbReference>
<dbReference type="GO" id="GO:0072344">
    <property type="term" value="P:rescue of stalled ribosome"/>
    <property type="evidence" value="ECO:0000314"/>
    <property type="project" value="UniProtKB"/>
</dbReference>
<dbReference type="GO" id="GO:0006414">
    <property type="term" value="P:translational elongation"/>
    <property type="evidence" value="ECO:0000318"/>
    <property type="project" value="GO_Central"/>
</dbReference>
<dbReference type="GO" id="GO:0006452">
    <property type="term" value="P:translational frameshifting"/>
    <property type="evidence" value="ECO:0000316"/>
    <property type="project" value="SGD"/>
</dbReference>
<dbReference type="CDD" id="cd04468">
    <property type="entry name" value="S1_eIF5A"/>
    <property type="match status" value="1"/>
</dbReference>
<dbReference type="FunFam" id="2.30.30.30:FF:000007">
    <property type="entry name" value="Eukaryotic translation initiation factor 5A"/>
    <property type="match status" value="1"/>
</dbReference>
<dbReference type="FunFam" id="2.40.50.140:FF:000034">
    <property type="entry name" value="Eukaryotic translation initiation factor 5A"/>
    <property type="match status" value="1"/>
</dbReference>
<dbReference type="Gene3D" id="2.30.30.30">
    <property type="match status" value="1"/>
</dbReference>
<dbReference type="Gene3D" id="2.40.50.140">
    <property type="entry name" value="Nucleic acid-binding proteins"/>
    <property type="match status" value="1"/>
</dbReference>
<dbReference type="InterPro" id="IPR001884">
    <property type="entry name" value="IF5A-like"/>
</dbReference>
<dbReference type="InterPro" id="IPR048670">
    <property type="entry name" value="IF5A-like_N"/>
</dbReference>
<dbReference type="InterPro" id="IPR012340">
    <property type="entry name" value="NA-bd_OB-fold"/>
</dbReference>
<dbReference type="InterPro" id="IPR014722">
    <property type="entry name" value="Rib_uL2_dom2"/>
</dbReference>
<dbReference type="InterPro" id="IPR019769">
    <property type="entry name" value="Trans_elong_IF5A_hypusine_site"/>
</dbReference>
<dbReference type="InterPro" id="IPR020189">
    <property type="entry name" value="Transl_elong_IF5A_C"/>
</dbReference>
<dbReference type="InterPro" id="IPR008991">
    <property type="entry name" value="Translation_prot_SH3-like_sf"/>
</dbReference>
<dbReference type="NCBIfam" id="TIGR00037">
    <property type="entry name" value="eIF_5A"/>
    <property type="match status" value="1"/>
</dbReference>
<dbReference type="PANTHER" id="PTHR11673">
    <property type="entry name" value="TRANSLATION INITIATION FACTOR 5A FAMILY MEMBER"/>
    <property type="match status" value="1"/>
</dbReference>
<dbReference type="Pfam" id="PF01287">
    <property type="entry name" value="eIF-5a"/>
    <property type="match status" value="1"/>
</dbReference>
<dbReference type="Pfam" id="PF21485">
    <property type="entry name" value="IF5A-like_N"/>
    <property type="match status" value="1"/>
</dbReference>
<dbReference type="PIRSF" id="PIRSF003025">
    <property type="entry name" value="eIF5A"/>
    <property type="match status" value="1"/>
</dbReference>
<dbReference type="SMART" id="SM01376">
    <property type="entry name" value="eIF-5a"/>
    <property type="match status" value="1"/>
</dbReference>
<dbReference type="SUPFAM" id="SSF50249">
    <property type="entry name" value="Nucleic acid-binding proteins"/>
    <property type="match status" value="1"/>
</dbReference>
<dbReference type="SUPFAM" id="SSF50104">
    <property type="entry name" value="Translation proteins SH3-like domain"/>
    <property type="match status" value="1"/>
</dbReference>
<dbReference type="PROSITE" id="PS00302">
    <property type="entry name" value="IF5A_HYPUSINE"/>
    <property type="match status" value="1"/>
</dbReference>
<comment type="function">
    <text evidence="2 5 7 8 11 12 13 14 18 20 21 23 26">Translation factor that promotes translation elongation and termination, particularly upon ribosome stalling at specific amino acid sequence contexts (PubMed:10229683, PubMed:16157662, PubMed:16914118, PubMed:19338753, PubMed:19424157, PubMed:23727016, PubMed:24923804, PubMed:28392174, PubMed:36804914, PubMed:641056, PubMed:8307948, PubMed:9582285). Binds between the exit (E) and peptidyl (P) site of the ribosome and promotes rescue of stalled ribosome: specifically required for efficient translation of polyproline-containing peptides as well as other motifs that stall the ribosome (PubMed:23727016, PubMed:24923804, PubMed:28392174). Acts as a ribosome quality control (RQC) cofactor by joining the RQC complex to facilitate peptidyl transfer during CAT tailing step (PubMed:36804914). Involved in actin dynamics and cell cycle progression, mRNA decay and probably in a pathway involved in stress response and maintenance of cell wall integrity (PubMed:16408210).</text>
</comment>
<comment type="subunit">
    <text evidence="4 6 10 16">Homodimer (PubMed:19120453). Binds to 80S ribosomes (PubMed:16215987, PubMed:27115996). Actively translating ribosomes show mutually exclusive binding of eIF5a (HYP2 or ANB1) and EFT1/eEF2 (PubMed:27115996). Interacts with DYS1 and LIA1 (PubMed:14675757, PubMed:16215987).</text>
</comment>
<comment type="interaction">
    <interactant intactId="EBI-9033">
        <id>P23301</id>
    </interactant>
    <interactant intactId="EBI-5871">
        <id>P38791</id>
        <label>DYS1</label>
    </interactant>
    <organismsDiffer>false</organismsDiffer>
    <experiments>5</experiments>
</comment>
<comment type="interaction">
    <interactant intactId="EBI-9033">
        <id>P23301</id>
    </interactant>
    <interactant intactId="EBI-25526">
        <id>P47120</id>
        <label>LIA1</label>
    </interactant>
    <organismsDiffer>false</organismsDiffer>
    <experiments>2</experiments>
</comment>
<comment type="subcellular location">
    <subcellularLocation>
        <location evidence="2 3">Cytoplasm</location>
    </subcellularLocation>
    <text evidence="3">Concentrates in the perinuclear region.</text>
</comment>
<comment type="induction">
    <text evidence="24">Expressed in aerobic conditions.</text>
</comment>
<comment type="PTM">
    <text evidence="10 15 17 19">Lys-51 undergoes hypusination, a unique post-translational modification that consists in the addition of a butylamino group from spermidine to lysine side chain, leading to the formation of the unusual amino acid hypusine. eIF-5As are the only known proteins to undergo this modification, which is essential for their function.</text>
</comment>
<comment type="miscellaneous">
    <text>There are two genes for eIF-5A in yeast.</text>
</comment>
<comment type="similarity">
    <text evidence="27">Belongs to the eIF-5A family.</text>
</comment>
<comment type="caution">
    <text evidence="28">Was originally thought (PubMed:641056) to be a translation initiation factor but further analysis (PubMed:19424157, PubMed:19338753) clearly suggests that it is involved in translation elongation and not translation initiation. subclass.</text>
</comment>
<proteinExistence type="evidence at protein level"/>
<gene>
    <name type="primary">HYP2</name>
    <name type="synonym">TIF51A</name>
    <name type="ordered locus">YEL034W</name>
    <name type="ORF">SYGP-ORF21</name>
</gene>
<feature type="initiator methionine" description="Removed" evidence="22 36">
    <location>
        <position position="1"/>
    </location>
</feature>
<feature type="chain" id="PRO_0000142488" description="Eukaryotic translation initiation factor 5A-1">
    <location>
        <begin position="2"/>
        <end position="157"/>
    </location>
</feature>
<feature type="modified residue" description="N-acetylserine" evidence="22 36">
    <location>
        <position position="2"/>
    </location>
</feature>
<feature type="modified residue" description="Phosphoserine" evidence="22 25 31 32 33 34">
    <location>
        <position position="2"/>
    </location>
</feature>
<feature type="modified residue" description="Phosphothreonine" evidence="1">
    <location>
        <position position="7"/>
    </location>
</feature>
<feature type="modified residue" description="Phosphothreonine" evidence="34">
    <location>
        <position position="10"/>
    </location>
</feature>
<feature type="modified residue" description="Hypusine" evidence="10 15 17 29 30">
    <location>
        <position position="51"/>
    </location>
</feature>
<feature type="modified residue" description="Phosphoserine" evidence="32 33">
    <location>
        <position position="74"/>
    </location>
</feature>
<feature type="cross-link" description="Glycyl lysine isopeptide (Lys-Gly) (interchain with G-Cter in ubiquitin)" evidence="35">
    <location>
        <position position="86"/>
    </location>
</feature>
<feature type="mutagenesis site" description="Temperature-sensitive growth phenotype; when associated with F-93. Reduced binding to the ribosome; when associated with F-93." evidence="9 16">
    <original>Q</original>
    <variation>H</variation>
    <location>
        <position position="22"/>
    </location>
</feature>
<feature type="mutagenesis site" description="Temperature-sensitive growth phenotype." evidence="9">
    <original>S</original>
    <variation>P</variation>
    <location>
        <position position="24"/>
    </location>
</feature>
<feature type="mutagenesis site" description="Temperature-sensitive growth phenotype. Lethal; when associated with L-83 and D-118 or with I-66 and D-118 or with D-118 and I-142 or with L-116 and D-118." evidence="2 3 9">
    <original>C</original>
    <variation>Y</variation>
    <location>
        <position position="39"/>
    </location>
</feature>
<feature type="mutagenesis site" description="Lethal." evidence="9">
    <original>G</original>
    <variation>A</variation>
    <variation>P</variation>
    <location>
        <position position="50"/>
    </location>
</feature>
<feature type="mutagenesis site" description="Impairs association to the ribosome and cell growth. Reduced ability to promote CAT tailing in response to ribosome stalling." evidence="6 8 9 10 12 20">
    <original>K</original>
    <variation>R</variation>
    <location>
        <position position="51"/>
    </location>
</feature>
<feature type="mutagenesis site" description="Lethal." evidence="9">
    <original>H</original>
    <variation>A</variation>
    <variation>D</variation>
    <location>
        <position position="52"/>
    </location>
</feature>
<feature type="mutagenesis site" description="Lethal." evidence="9">
    <original>G</original>
    <variation>A</variation>
    <variation>D</variation>
    <location>
        <position position="53"/>
    </location>
</feature>
<feature type="mutagenesis site" description="Lethal." evidence="9">
    <original>H</original>
    <variation>D</variation>
    <location>
        <position position="54"/>
    </location>
</feature>
<feature type="mutagenesis site" description="Temperature-sensitive growth phenotype. Reduced binding to the ribosome." evidence="9 16">
    <original>K</original>
    <variation>A</variation>
    <location>
        <position position="56"/>
    </location>
</feature>
<feature type="mutagenesis site" description="Lethal." evidence="9">
    <original>K</original>
    <variation>D</variation>
    <location>
        <position position="56"/>
    </location>
</feature>
<feature type="mutagenesis site" description="Temperature-sensitive growth phenotype." evidence="9">
    <original>V</original>
    <variation>D</variation>
    <location>
        <position position="57"/>
    </location>
</feature>
<feature type="mutagenesis site" description="Impairs programmed ribosomal frameshifting." evidence="12">
    <original>D</original>
    <variation>V</variation>
    <location>
        <position position="63"/>
    </location>
</feature>
<feature type="mutagenesis site" description="Temperature-sensitive growth phenotype. Lethal; when associated with Y-39 and D-118." evidence="9">
    <original>T</original>
    <variation>I</variation>
    <location>
        <position position="66"/>
    </location>
</feature>
<feature type="mutagenesis site" description="Reduced ability to promote CAT tailing in response to ribosome stalling." evidence="20">
    <original>K</original>
    <variation>A</variation>
    <location>
        <position position="69"/>
    </location>
</feature>
<feature type="mutagenesis site" description="Temperature-sensitive growth phenotype. Lethal; when associated with Y-39 and D-118." evidence="2 3 9">
    <original>P</original>
    <variation>S</variation>
    <variation>L</variation>
    <location>
        <position position="83"/>
    </location>
</feature>
<feature type="mutagenesis site" description="Lethal. Reduced binding to the ribosome; when associated with H-22." evidence="9 16">
    <original>L</original>
    <variation>F</variation>
    <location>
        <position position="93"/>
    </location>
</feature>
<feature type="mutagenesis site" description="Temperature-sensitive growth phenotype. Impaired ability to promote CAT tailing in response to ribosome stalling." evidence="7 20">
    <original>L</original>
    <variation>A</variation>
    <location>
        <position position="102"/>
    </location>
</feature>
<feature type="mutagenesis site" description="Temperature-sensitive growth phenotype; when associated with D-118. Lethal; when associated with Y-39 and D-118." evidence="9">
    <original>P</original>
    <variation>L</variation>
    <location>
        <position position="116"/>
    </location>
</feature>
<feature type="mutagenesis site" description="Temperature-sensitive growth phenotype; when associated with L-116 or W-122 or F-140 or I-142. Lethal; when associated with Y-39 and I-66 or with Y-39 and L-83 or with Y-39 and L-116 or with Y-39 and F-140 or with Y-39 and I-142 or with N-120 and D-124." evidence="3 9">
    <original>G</original>
    <variation>D</variation>
    <location>
        <position position="118"/>
    </location>
</feature>
<feature type="mutagenesis site" description="Temperature-sensitive growth phenotype; when associated with W-122." evidence="9">
    <original>G</original>
    <variation>V</variation>
    <location>
        <position position="118"/>
    </location>
</feature>
<feature type="mutagenesis site" description="Lethal; when associated with D-118 and D-124." evidence="9">
    <original>L</original>
    <variation>N</variation>
    <location>
        <position position="120"/>
    </location>
</feature>
<feature type="mutagenesis site" description="Temperature-sensitive growth phenotype; when associated with V-118." evidence="9">
    <original>D</original>
    <variation>W</variation>
    <location>
        <position position="122"/>
    </location>
</feature>
<feature type="mutagenesis site" description="Lethal; when associated with D-118 and N-120." evidence="9">
    <original>L</original>
    <variation>D</variation>
    <location>
        <position position="124"/>
    </location>
</feature>
<feature type="mutagenesis site" description="Temperature-sensitive growth phenotype; when associated with D-118. Lethal; when associated with Y-39 and D-118." evidence="9">
    <original>S</original>
    <variation>F</variation>
    <location>
        <position position="140"/>
    </location>
</feature>
<feature type="mutagenesis site" description="Temperature-sensitive growth phenotype; when associated with D-118. Lethal; when associated with Y-39 and D-118." evidence="9">
    <original>M</original>
    <variation>I</variation>
    <location>
        <position position="142"/>
    </location>
</feature>
<feature type="mutagenesis site" description="In ts1159; temperature-sensitive growth phenotype and impairs programmed ribosomal frameshifting. Impaired ability to promote efficient translation of polyproline-containing peptides that stall ribosomes." evidence="9 12 13 26">
    <original>S</original>
    <variation>P</variation>
    <location>
        <position position="149"/>
    </location>
</feature>
<feature type="strand" evidence="37">
    <location>
        <begin position="19"/>
        <end position="22"/>
    </location>
</feature>
<feature type="turn" evidence="37">
    <location>
        <begin position="23"/>
        <end position="25"/>
    </location>
</feature>
<feature type="strand" evidence="37">
    <location>
        <begin position="31"/>
        <end position="34"/>
    </location>
</feature>
<feature type="strand" evidence="37">
    <location>
        <begin position="37"/>
        <end position="47"/>
    </location>
</feature>
<feature type="strand" evidence="37">
    <location>
        <begin position="50"/>
        <end position="53"/>
    </location>
</feature>
<feature type="strand" evidence="37">
    <location>
        <begin position="56"/>
        <end position="66"/>
    </location>
</feature>
<feature type="strand" evidence="37">
    <location>
        <begin position="70"/>
        <end position="82"/>
    </location>
</feature>
<feature type="strand" evidence="37">
    <location>
        <begin position="87"/>
        <end position="91"/>
    </location>
</feature>
<feature type="turn" evidence="37">
    <location>
        <begin position="96"/>
        <end position="99"/>
    </location>
</feature>
<feature type="strand" evidence="37">
    <location>
        <begin position="105"/>
        <end position="107"/>
    </location>
</feature>
<feature type="helix" evidence="37">
    <location>
        <begin position="120"/>
        <end position="126"/>
    </location>
</feature>
<feature type="strand" evidence="37">
    <location>
        <begin position="135"/>
        <end position="141"/>
    </location>
</feature>
<feature type="strand" evidence="37">
    <location>
        <begin position="144"/>
        <end position="150"/>
    </location>
</feature>
<organism>
    <name type="scientific">Saccharomyces cerevisiae (strain ATCC 204508 / S288c)</name>
    <name type="common">Baker's yeast</name>
    <dbReference type="NCBI Taxonomy" id="559292"/>
    <lineage>
        <taxon>Eukaryota</taxon>
        <taxon>Fungi</taxon>
        <taxon>Dikarya</taxon>
        <taxon>Ascomycota</taxon>
        <taxon>Saccharomycotina</taxon>
        <taxon>Saccharomycetes</taxon>
        <taxon>Saccharomycetales</taxon>
        <taxon>Saccharomycetaceae</taxon>
        <taxon>Saccharomyces</taxon>
    </lineage>
</organism>
<name>IF5A1_YEAST</name>